<comment type="function">
    <text evidence="1">ATP-dependent specificity component of the Clp protease. It directs the protease to specific substrates. Can perform chaperone functions in the absence of ClpP.</text>
</comment>
<comment type="subunit">
    <text evidence="1">Component of the ClpX-ClpP complex. Forms a hexameric ring that, in the presence of ATP, binds to fourteen ClpP subunits assembled into a disk-like structure with a central cavity, resembling the structure of eukaryotic proteasomes.</text>
</comment>
<comment type="similarity">
    <text evidence="1">Belongs to the ClpX chaperone family.</text>
</comment>
<organism>
    <name type="scientific">Bacillus cereus (strain ATCC 10987 / NRS 248)</name>
    <dbReference type="NCBI Taxonomy" id="222523"/>
    <lineage>
        <taxon>Bacteria</taxon>
        <taxon>Bacillati</taxon>
        <taxon>Bacillota</taxon>
        <taxon>Bacilli</taxon>
        <taxon>Bacillales</taxon>
        <taxon>Bacillaceae</taxon>
        <taxon>Bacillus</taxon>
        <taxon>Bacillus cereus group</taxon>
    </lineage>
</organism>
<dbReference type="EMBL" id="AE017194">
    <property type="protein sequence ID" value="AAS43464.1"/>
    <property type="molecule type" value="Genomic_DNA"/>
</dbReference>
<dbReference type="SMR" id="Q72ZV4"/>
<dbReference type="KEGG" id="bca:BCE_4563"/>
<dbReference type="HOGENOM" id="CLU_014218_8_2_9"/>
<dbReference type="Proteomes" id="UP000002527">
    <property type="component" value="Chromosome"/>
</dbReference>
<dbReference type="GO" id="GO:0009376">
    <property type="term" value="C:HslUV protease complex"/>
    <property type="evidence" value="ECO:0007669"/>
    <property type="project" value="TreeGrafter"/>
</dbReference>
<dbReference type="GO" id="GO:0005524">
    <property type="term" value="F:ATP binding"/>
    <property type="evidence" value="ECO:0007669"/>
    <property type="project" value="UniProtKB-UniRule"/>
</dbReference>
<dbReference type="GO" id="GO:0016887">
    <property type="term" value="F:ATP hydrolysis activity"/>
    <property type="evidence" value="ECO:0007669"/>
    <property type="project" value="InterPro"/>
</dbReference>
<dbReference type="GO" id="GO:0140662">
    <property type="term" value="F:ATP-dependent protein folding chaperone"/>
    <property type="evidence" value="ECO:0007669"/>
    <property type="project" value="InterPro"/>
</dbReference>
<dbReference type="GO" id="GO:0046983">
    <property type="term" value="F:protein dimerization activity"/>
    <property type="evidence" value="ECO:0007669"/>
    <property type="project" value="InterPro"/>
</dbReference>
<dbReference type="GO" id="GO:0051082">
    <property type="term" value="F:unfolded protein binding"/>
    <property type="evidence" value="ECO:0007669"/>
    <property type="project" value="UniProtKB-UniRule"/>
</dbReference>
<dbReference type="GO" id="GO:0008270">
    <property type="term" value="F:zinc ion binding"/>
    <property type="evidence" value="ECO:0007669"/>
    <property type="project" value="InterPro"/>
</dbReference>
<dbReference type="GO" id="GO:0051301">
    <property type="term" value="P:cell division"/>
    <property type="evidence" value="ECO:0007669"/>
    <property type="project" value="TreeGrafter"/>
</dbReference>
<dbReference type="GO" id="GO:0051603">
    <property type="term" value="P:proteolysis involved in protein catabolic process"/>
    <property type="evidence" value="ECO:0007669"/>
    <property type="project" value="TreeGrafter"/>
</dbReference>
<dbReference type="CDD" id="cd19497">
    <property type="entry name" value="RecA-like_ClpX"/>
    <property type="match status" value="1"/>
</dbReference>
<dbReference type="FunFam" id="1.10.8.60:FF:000002">
    <property type="entry name" value="ATP-dependent Clp protease ATP-binding subunit ClpX"/>
    <property type="match status" value="1"/>
</dbReference>
<dbReference type="FunFam" id="3.40.50.300:FF:000005">
    <property type="entry name" value="ATP-dependent Clp protease ATP-binding subunit ClpX"/>
    <property type="match status" value="1"/>
</dbReference>
<dbReference type="Gene3D" id="1.10.8.60">
    <property type="match status" value="1"/>
</dbReference>
<dbReference type="Gene3D" id="6.20.220.10">
    <property type="entry name" value="ClpX chaperone, C4-type zinc finger domain"/>
    <property type="match status" value="1"/>
</dbReference>
<dbReference type="Gene3D" id="3.40.50.300">
    <property type="entry name" value="P-loop containing nucleotide triphosphate hydrolases"/>
    <property type="match status" value="1"/>
</dbReference>
<dbReference type="HAMAP" id="MF_00175">
    <property type="entry name" value="ClpX"/>
    <property type="match status" value="1"/>
</dbReference>
<dbReference type="InterPro" id="IPR003593">
    <property type="entry name" value="AAA+_ATPase"/>
</dbReference>
<dbReference type="InterPro" id="IPR050052">
    <property type="entry name" value="ATP-dep_Clp_protease_ClpX"/>
</dbReference>
<dbReference type="InterPro" id="IPR003959">
    <property type="entry name" value="ATPase_AAA_core"/>
</dbReference>
<dbReference type="InterPro" id="IPR019489">
    <property type="entry name" value="Clp_ATPase_C"/>
</dbReference>
<dbReference type="InterPro" id="IPR004487">
    <property type="entry name" value="Clp_protease_ATP-bd_su_ClpX"/>
</dbReference>
<dbReference type="InterPro" id="IPR046425">
    <property type="entry name" value="ClpX_bact"/>
</dbReference>
<dbReference type="InterPro" id="IPR027417">
    <property type="entry name" value="P-loop_NTPase"/>
</dbReference>
<dbReference type="InterPro" id="IPR010603">
    <property type="entry name" value="Znf_CppX_C4"/>
</dbReference>
<dbReference type="InterPro" id="IPR038366">
    <property type="entry name" value="Znf_CppX_C4_sf"/>
</dbReference>
<dbReference type="NCBIfam" id="TIGR00382">
    <property type="entry name" value="clpX"/>
    <property type="match status" value="1"/>
</dbReference>
<dbReference type="NCBIfam" id="NF003745">
    <property type="entry name" value="PRK05342.1"/>
    <property type="match status" value="1"/>
</dbReference>
<dbReference type="PANTHER" id="PTHR48102:SF7">
    <property type="entry name" value="ATP-DEPENDENT CLP PROTEASE ATP-BINDING SUBUNIT CLPX-LIKE, MITOCHONDRIAL"/>
    <property type="match status" value="1"/>
</dbReference>
<dbReference type="PANTHER" id="PTHR48102">
    <property type="entry name" value="ATP-DEPENDENT CLP PROTEASE ATP-BINDING SUBUNIT CLPX-LIKE, MITOCHONDRIAL-RELATED"/>
    <property type="match status" value="1"/>
</dbReference>
<dbReference type="Pfam" id="PF07724">
    <property type="entry name" value="AAA_2"/>
    <property type="match status" value="1"/>
</dbReference>
<dbReference type="Pfam" id="PF10431">
    <property type="entry name" value="ClpB_D2-small"/>
    <property type="match status" value="1"/>
</dbReference>
<dbReference type="Pfam" id="PF06689">
    <property type="entry name" value="zf-C4_ClpX"/>
    <property type="match status" value="1"/>
</dbReference>
<dbReference type="SMART" id="SM00382">
    <property type="entry name" value="AAA"/>
    <property type="match status" value="1"/>
</dbReference>
<dbReference type="SMART" id="SM01086">
    <property type="entry name" value="ClpB_D2-small"/>
    <property type="match status" value="1"/>
</dbReference>
<dbReference type="SMART" id="SM00994">
    <property type="entry name" value="zf-C4_ClpX"/>
    <property type="match status" value="1"/>
</dbReference>
<dbReference type="SUPFAM" id="SSF57716">
    <property type="entry name" value="Glucocorticoid receptor-like (DNA-binding domain)"/>
    <property type="match status" value="1"/>
</dbReference>
<dbReference type="SUPFAM" id="SSF52540">
    <property type="entry name" value="P-loop containing nucleoside triphosphate hydrolases"/>
    <property type="match status" value="1"/>
</dbReference>
<dbReference type="PROSITE" id="PS51902">
    <property type="entry name" value="CLPX_ZB"/>
    <property type="match status" value="1"/>
</dbReference>
<keyword id="KW-0067">ATP-binding</keyword>
<keyword id="KW-0143">Chaperone</keyword>
<keyword id="KW-0479">Metal-binding</keyword>
<keyword id="KW-0547">Nucleotide-binding</keyword>
<keyword id="KW-0862">Zinc</keyword>
<name>CLPX_BACC1</name>
<accession>Q72ZV4</accession>
<proteinExistence type="inferred from homology"/>
<evidence type="ECO:0000255" key="1">
    <source>
        <dbReference type="HAMAP-Rule" id="MF_00175"/>
    </source>
</evidence>
<evidence type="ECO:0000255" key="2">
    <source>
        <dbReference type="PROSITE-ProRule" id="PRU01250"/>
    </source>
</evidence>
<sequence length="419" mass="46199">MFKFNDEKGQLKCSFCGKTQTQVRKLVAGPGVYICDECIELCTEIVQEELAKDEEVEFKDVPKPVEIREILDEYVIGQDNAKKALAVAVYNHYKRINSNSKIDDVELAKSNIALIGPTGSGKTLLAQTLARILNVPFAIADATSLTEAGYVGEDVENILLKLIQAADYDVEKAEKGIIYIDEIDKVARKSENPSITRDVSGEGVQQALLKILEGTVASVPPQGGRKHPHQEFIQIDTTNILFICGGAFDGIEPIIKRRLGEKVIGFGSEKKNADVNEKHVLSHVLPEDLLRFGLIPEFIGRLPVIANLEPLDEDALVDILTKPKNALVKQFQKLLELDDVELEFEEGALIEIAKKAIERKTGARGLRSIIEGLMLEVMFELPSRKDIEKCILTKETVADNAAPKLVLQDGTVLDTKTSA</sequence>
<gene>
    <name evidence="1" type="primary">clpX</name>
    <name type="ordered locus">BCE_4563</name>
</gene>
<feature type="chain" id="PRO_0000160306" description="ATP-dependent Clp protease ATP-binding subunit ClpX">
    <location>
        <begin position="1"/>
        <end position="419"/>
    </location>
</feature>
<feature type="domain" description="ClpX-type ZB" evidence="2">
    <location>
        <begin position="1"/>
        <end position="54"/>
    </location>
</feature>
<feature type="binding site" evidence="2">
    <location>
        <position position="13"/>
    </location>
    <ligand>
        <name>Zn(2+)</name>
        <dbReference type="ChEBI" id="CHEBI:29105"/>
    </ligand>
</feature>
<feature type="binding site" evidence="2">
    <location>
        <position position="16"/>
    </location>
    <ligand>
        <name>Zn(2+)</name>
        <dbReference type="ChEBI" id="CHEBI:29105"/>
    </ligand>
</feature>
<feature type="binding site" evidence="2">
    <location>
        <position position="35"/>
    </location>
    <ligand>
        <name>Zn(2+)</name>
        <dbReference type="ChEBI" id="CHEBI:29105"/>
    </ligand>
</feature>
<feature type="binding site" evidence="2">
    <location>
        <position position="38"/>
    </location>
    <ligand>
        <name>Zn(2+)</name>
        <dbReference type="ChEBI" id="CHEBI:29105"/>
    </ligand>
</feature>
<feature type="binding site" evidence="1">
    <location>
        <begin position="117"/>
        <end position="124"/>
    </location>
    <ligand>
        <name>ATP</name>
        <dbReference type="ChEBI" id="CHEBI:30616"/>
    </ligand>
</feature>
<protein>
    <recommendedName>
        <fullName evidence="1">ATP-dependent Clp protease ATP-binding subunit ClpX</fullName>
    </recommendedName>
</protein>
<reference key="1">
    <citation type="journal article" date="2004" name="Nucleic Acids Res.">
        <title>The genome sequence of Bacillus cereus ATCC 10987 reveals metabolic adaptations and a large plasmid related to Bacillus anthracis pXO1.</title>
        <authorList>
            <person name="Rasko D.A."/>
            <person name="Ravel J."/>
            <person name="Oekstad O.A."/>
            <person name="Helgason E."/>
            <person name="Cer R.Z."/>
            <person name="Jiang L."/>
            <person name="Shores K.A."/>
            <person name="Fouts D.E."/>
            <person name="Tourasse N.J."/>
            <person name="Angiuoli S.V."/>
            <person name="Kolonay J.F."/>
            <person name="Nelson W.C."/>
            <person name="Kolstoe A.-B."/>
            <person name="Fraser C.M."/>
            <person name="Read T.D."/>
        </authorList>
    </citation>
    <scope>NUCLEOTIDE SEQUENCE [LARGE SCALE GENOMIC DNA]</scope>
    <source>
        <strain>ATCC 10987 / NRS 248</strain>
    </source>
</reference>